<name>TYSY_PHOLL</name>
<keyword id="KW-0963">Cytoplasm</keyword>
<keyword id="KW-0489">Methyltransferase</keyword>
<keyword id="KW-0545">Nucleotide biosynthesis</keyword>
<keyword id="KW-1185">Reference proteome</keyword>
<keyword id="KW-0808">Transferase</keyword>
<comment type="function">
    <text evidence="1">Catalyzes the reductive methylation of 2'-deoxyuridine-5'-monophosphate (dUMP) to 2'-deoxythymidine-5'-monophosphate (dTMP) while utilizing 5,10-methylenetetrahydrofolate (mTHF) as the methyl donor and reductant in the reaction, yielding dihydrofolate (DHF) as a by-product. This enzymatic reaction provides an intracellular de novo source of dTMP, an essential precursor for DNA biosynthesis.</text>
</comment>
<comment type="catalytic activity">
    <reaction evidence="1">
        <text>dUMP + (6R)-5,10-methylene-5,6,7,8-tetrahydrofolate = 7,8-dihydrofolate + dTMP</text>
        <dbReference type="Rhea" id="RHEA:12104"/>
        <dbReference type="ChEBI" id="CHEBI:15636"/>
        <dbReference type="ChEBI" id="CHEBI:57451"/>
        <dbReference type="ChEBI" id="CHEBI:63528"/>
        <dbReference type="ChEBI" id="CHEBI:246422"/>
        <dbReference type="EC" id="2.1.1.45"/>
    </reaction>
</comment>
<comment type="pathway">
    <text evidence="1">Pyrimidine metabolism; dTTP biosynthesis.</text>
</comment>
<comment type="subunit">
    <text evidence="1">Homodimer.</text>
</comment>
<comment type="subcellular location">
    <subcellularLocation>
        <location evidence="1">Cytoplasm</location>
    </subcellularLocation>
</comment>
<comment type="similarity">
    <text evidence="1">Belongs to the thymidylate synthase family. Bacterial-type ThyA subfamily.</text>
</comment>
<gene>
    <name evidence="1" type="primary">thyA</name>
    <name type="ordered locus">plu0623</name>
</gene>
<reference key="1">
    <citation type="journal article" date="2003" name="Nat. Biotechnol.">
        <title>The genome sequence of the entomopathogenic bacterium Photorhabdus luminescens.</title>
        <authorList>
            <person name="Duchaud E."/>
            <person name="Rusniok C."/>
            <person name="Frangeul L."/>
            <person name="Buchrieser C."/>
            <person name="Givaudan A."/>
            <person name="Taourit S."/>
            <person name="Bocs S."/>
            <person name="Boursaux-Eude C."/>
            <person name="Chandler M."/>
            <person name="Charles J.-F."/>
            <person name="Dassa E."/>
            <person name="Derose R."/>
            <person name="Derzelle S."/>
            <person name="Freyssinet G."/>
            <person name="Gaudriault S."/>
            <person name="Medigue C."/>
            <person name="Lanois A."/>
            <person name="Powell K."/>
            <person name="Siguier P."/>
            <person name="Vincent R."/>
            <person name="Wingate V."/>
            <person name="Zouine M."/>
            <person name="Glaser P."/>
            <person name="Boemare N."/>
            <person name="Danchin A."/>
            <person name="Kunst F."/>
        </authorList>
    </citation>
    <scope>NUCLEOTIDE SEQUENCE [LARGE SCALE GENOMIC DNA]</scope>
    <source>
        <strain>DSM 15139 / CIP 105565 / TT01</strain>
    </source>
</reference>
<organism>
    <name type="scientific">Photorhabdus laumondii subsp. laumondii (strain DSM 15139 / CIP 105565 / TT01)</name>
    <name type="common">Photorhabdus luminescens subsp. laumondii</name>
    <dbReference type="NCBI Taxonomy" id="243265"/>
    <lineage>
        <taxon>Bacteria</taxon>
        <taxon>Pseudomonadati</taxon>
        <taxon>Pseudomonadota</taxon>
        <taxon>Gammaproteobacteria</taxon>
        <taxon>Enterobacterales</taxon>
        <taxon>Morganellaceae</taxon>
        <taxon>Photorhabdus</taxon>
    </lineage>
</organism>
<accession>Q7N8U4</accession>
<proteinExistence type="inferred from homology"/>
<protein>
    <recommendedName>
        <fullName evidence="1">Thymidylate synthase</fullName>
        <shortName evidence="1">TS</shortName>
        <shortName evidence="1">TSase</shortName>
        <ecNumber evidence="1">2.1.1.45</ecNumber>
    </recommendedName>
</protein>
<evidence type="ECO:0000255" key="1">
    <source>
        <dbReference type="HAMAP-Rule" id="MF_00008"/>
    </source>
</evidence>
<sequence length="264" mass="30184">MKQYLDLMTRVLAEGTPKADRTGTGTLSIFGHQMRFNLQDGFPLVTTKRCHIRSIIHELLWFLNGDTNIKYLHENGVTIWDEWADENGDLGPVYGKQWRAWGTADGRQIDQLKTVLEQLKSDPDSRRIIVSAWNVGELDKMALAPCHAFFQFYVADGKLSCQLYQRSCDVFLGLPFNIASYALLVHMMAQQCDLEVGDFVWTGGDTHLYSNHMEQTKLQLSREPRSLPKLVIKRKPASLFDYKFDDFEIVDYDPHPGIKAPVAI</sequence>
<feature type="chain" id="PRO_0000141000" description="Thymidylate synthase">
    <location>
        <begin position="1"/>
        <end position="264"/>
    </location>
</feature>
<feature type="active site" description="Nucleophile" evidence="1">
    <location>
        <position position="146"/>
    </location>
</feature>
<feature type="binding site" description="in other chain" evidence="1">
    <location>
        <position position="21"/>
    </location>
    <ligand>
        <name>dUMP</name>
        <dbReference type="ChEBI" id="CHEBI:246422"/>
        <note>ligand shared between dimeric partners</note>
    </ligand>
</feature>
<feature type="binding site" evidence="1">
    <location>
        <position position="51"/>
    </location>
    <ligand>
        <name>(6R)-5,10-methylene-5,6,7,8-tetrahydrofolate</name>
        <dbReference type="ChEBI" id="CHEBI:15636"/>
    </ligand>
</feature>
<feature type="binding site" evidence="1">
    <location>
        <begin position="126"/>
        <end position="127"/>
    </location>
    <ligand>
        <name>dUMP</name>
        <dbReference type="ChEBI" id="CHEBI:246422"/>
        <note>ligand shared between dimeric partners</note>
    </ligand>
</feature>
<feature type="binding site" description="in other chain" evidence="1">
    <location>
        <begin position="166"/>
        <end position="169"/>
    </location>
    <ligand>
        <name>dUMP</name>
        <dbReference type="ChEBI" id="CHEBI:246422"/>
        <note>ligand shared between dimeric partners</note>
    </ligand>
</feature>
<feature type="binding site" evidence="1">
    <location>
        <position position="169"/>
    </location>
    <ligand>
        <name>(6R)-5,10-methylene-5,6,7,8-tetrahydrofolate</name>
        <dbReference type="ChEBI" id="CHEBI:15636"/>
    </ligand>
</feature>
<feature type="binding site" description="in other chain" evidence="1">
    <location>
        <position position="177"/>
    </location>
    <ligand>
        <name>dUMP</name>
        <dbReference type="ChEBI" id="CHEBI:246422"/>
        <note>ligand shared between dimeric partners</note>
    </ligand>
</feature>
<feature type="binding site" description="in other chain" evidence="1">
    <location>
        <begin position="207"/>
        <end position="209"/>
    </location>
    <ligand>
        <name>dUMP</name>
        <dbReference type="ChEBI" id="CHEBI:246422"/>
        <note>ligand shared between dimeric partners</note>
    </ligand>
</feature>
<feature type="binding site" evidence="1">
    <location>
        <position position="263"/>
    </location>
    <ligand>
        <name>(6R)-5,10-methylene-5,6,7,8-tetrahydrofolate</name>
        <dbReference type="ChEBI" id="CHEBI:15636"/>
    </ligand>
</feature>
<dbReference type="EC" id="2.1.1.45" evidence="1"/>
<dbReference type="EMBL" id="BX571861">
    <property type="protein sequence ID" value="CAE12918.1"/>
    <property type="molecule type" value="Genomic_DNA"/>
</dbReference>
<dbReference type="RefSeq" id="WP_011144999.1">
    <property type="nucleotide sequence ID" value="NC_005126.1"/>
</dbReference>
<dbReference type="SMR" id="Q7N8U4"/>
<dbReference type="STRING" id="243265.plu0623"/>
<dbReference type="GeneID" id="48846909"/>
<dbReference type="KEGG" id="plu:plu0623"/>
<dbReference type="eggNOG" id="COG0207">
    <property type="taxonomic scope" value="Bacteria"/>
</dbReference>
<dbReference type="HOGENOM" id="CLU_021669_0_0_6"/>
<dbReference type="OrthoDB" id="9774633at2"/>
<dbReference type="UniPathway" id="UPA00575"/>
<dbReference type="Proteomes" id="UP000002514">
    <property type="component" value="Chromosome"/>
</dbReference>
<dbReference type="GO" id="GO:0005829">
    <property type="term" value="C:cytosol"/>
    <property type="evidence" value="ECO:0007669"/>
    <property type="project" value="TreeGrafter"/>
</dbReference>
<dbReference type="GO" id="GO:0004799">
    <property type="term" value="F:thymidylate synthase activity"/>
    <property type="evidence" value="ECO:0007669"/>
    <property type="project" value="UniProtKB-UniRule"/>
</dbReference>
<dbReference type="GO" id="GO:0006231">
    <property type="term" value="P:dTMP biosynthetic process"/>
    <property type="evidence" value="ECO:0007669"/>
    <property type="project" value="UniProtKB-UniRule"/>
</dbReference>
<dbReference type="GO" id="GO:0006235">
    <property type="term" value="P:dTTP biosynthetic process"/>
    <property type="evidence" value="ECO:0007669"/>
    <property type="project" value="UniProtKB-UniRule"/>
</dbReference>
<dbReference type="GO" id="GO:0032259">
    <property type="term" value="P:methylation"/>
    <property type="evidence" value="ECO:0007669"/>
    <property type="project" value="UniProtKB-KW"/>
</dbReference>
<dbReference type="CDD" id="cd00351">
    <property type="entry name" value="TS_Pyrimidine_HMase"/>
    <property type="match status" value="1"/>
</dbReference>
<dbReference type="FunFam" id="3.30.572.10:FF:000001">
    <property type="entry name" value="Thymidylate synthase"/>
    <property type="match status" value="1"/>
</dbReference>
<dbReference type="Gene3D" id="3.30.572.10">
    <property type="entry name" value="Thymidylate synthase/dCMP hydroxymethylase domain"/>
    <property type="match status" value="1"/>
</dbReference>
<dbReference type="HAMAP" id="MF_00008">
    <property type="entry name" value="Thymidy_synth_bact"/>
    <property type="match status" value="1"/>
</dbReference>
<dbReference type="InterPro" id="IPR045097">
    <property type="entry name" value="Thymidate_synth/dCMP_Mease"/>
</dbReference>
<dbReference type="InterPro" id="IPR023451">
    <property type="entry name" value="Thymidate_synth/dCMP_Mease_dom"/>
</dbReference>
<dbReference type="InterPro" id="IPR036926">
    <property type="entry name" value="Thymidate_synth/dCMP_Mease_sf"/>
</dbReference>
<dbReference type="InterPro" id="IPR000398">
    <property type="entry name" value="Thymidylate_synthase"/>
</dbReference>
<dbReference type="InterPro" id="IPR020940">
    <property type="entry name" value="Thymidylate_synthase_AS"/>
</dbReference>
<dbReference type="NCBIfam" id="NF002497">
    <property type="entry name" value="PRK01827.1-3"/>
    <property type="match status" value="1"/>
</dbReference>
<dbReference type="NCBIfam" id="NF002499">
    <property type="entry name" value="PRK01827.1-5"/>
    <property type="match status" value="1"/>
</dbReference>
<dbReference type="NCBIfam" id="TIGR03284">
    <property type="entry name" value="thym_sym"/>
    <property type="match status" value="2"/>
</dbReference>
<dbReference type="PANTHER" id="PTHR11548:SF9">
    <property type="entry name" value="THYMIDYLATE SYNTHASE"/>
    <property type="match status" value="1"/>
</dbReference>
<dbReference type="PANTHER" id="PTHR11548">
    <property type="entry name" value="THYMIDYLATE SYNTHASE 1"/>
    <property type="match status" value="1"/>
</dbReference>
<dbReference type="Pfam" id="PF00303">
    <property type="entry name" value="Thymidylat_synt"/>
    <property type="match status" value="1"/>
</dbReference>
<dbReference type="PRINTS" id="PR00108">
    <property type="entry name" value="THYMDSNTHASE"/>
</dbReference>
<dbReference type="SUPFAM" id="SSF55831">
    <property type="entry name" value="Thymidylate synthase/dCMP hydroxymethylase"/>
    <property type="match status" value="1"/>
</dbReference>
<dbReference type="PROSITE" id="PS00091">
    <property type="entry name" value="THYMIDYLATE_SYNTHASE"/>
    <property type="match status" value="1"/>
</dbReference>